<name>Y3711_CLOAB</name>
<protein>
    <recommendedName>
        <fullName>Uncharacterized protein CA_C3711</fullName>
    </recommendedName>
</protein>
<sequence length="90" mass="10302">MSERIDISIELNGQQLDFCIPTEITMGRFTELMHQVLKGGVMPQNWTLKLKDKNIKVDDTDLIKELPIGSGDVFCILPTQERQENLNENI</sequence>
<accession>Q04353</accession>
<gene>
    <name type="ordered locus">CA_C3711</name>
</gene>
<feature type="chain" id="PRO_0000207115" description="Uncharacterized protein CA_C3711">
    <location>
        <begin position="1"/>
        <end position="90"/>
    </location>
</feature>
<proteinExistence type="predicted"/>
<dbReference type="EMBL" id="X65276">
    <property type="protein sequence ID" value="CAA46377.1"/>
    <property type="status" value="ALT_INIT"/>
    <property type="molecule type" value="Genomic_DNA"/>
</dbReference>
<dbReference type="EMBL" id="AE001437">
    <property type="protein sequence ID" value="AAK81631.1"/>
    <property type="molecule type" value="Genomic_DNA"/>
</dbReference>
<dbReference type="PIR" id="D97355">
    <property type="entry name" value="D97355"/>
</dbReference>
<dbReference type="RefSeq" id="NP_350291.1">
    <property type="nucleotide sequence ID" value="NC_003030.1"/>
</dbReference>
<dbReference type="RefSeq" id="WP_010966971.1">
    <property type="nucleotide sequence ID" value="NC_003030.1"/>
</dbReference>
<dbReference type="SMR" id="Q04353"/>
<dbReference type="STRING" id="272562.CA_C3711"/>
<dbReference type="KEGG" id="cac:CA_C3711"/>
<dbReference type="PATRIC" id="fig|272562.8.peg.3900"/>
<dbReference type="HOGENOM" id="CLU_2435561_0_0_9"/>
<dbReference type="OrthoDB" id="2190294at2"/>
<dbReference type="Proteomes" id="UP000000814">
    <property type="component" value="Chromosome"/>
</dbReference>
<dbReference type="Gene3D" id="3.10.20.90">
    <property type="entry name" value="Phosphatidylinositol 3-kinase Catalytic Subunit, Chain A, domain 1"/>
    <property type="match status" value="1"/>
</dbReference>
<dbReference type="InterPro" id="IPR024962">
    <property type="entry name" value="YukD-like"/>
</dbReference>
<dbReference type="Pfam" id="PF08817">
    <property type="entry name" value="YukD"/>
    <property type="match status" value="1"/>
</dbReference>
<keyword id="KW-1185">Reference proteome</keyword>
<organism>
    <name type="scientific">Clostridium acetobutylicum (strain ATCC 824 / DSM 792 / JCM 1419 / IAM 19013 / LMG 5710 / NBRC 13948 / NRRL B-527 / VKM B-1787 / 2291 / W)</name>
    <dbReference type="NCBI Taxonomy" id="272562"/>
    <lineage>
        <taxon>Bacteria</taxon>
        <taxon>Bacillati</taxon>
        <taxon>Bacillota</taxon>
        <taxon>Clostridia</taxon>
        <taxon>Eubacteriales</taxon>
        <taxon>Clostridiaceae</taxon>
        <taxon>Clostridium</taxon>
    </lineage>
</organism>
<evidence type="ECO:0000305" key="1"/>
<reference key="1">
    <citation type="journal article" date="1993" name="J. Bacteriol.">
        <title>Sequence and molecular characterization of a DNA region encoding a small heat shock protein of Clostridium acetobutylicum.</title>
        <authorList>
            <person name="Sauer U."/>
            <person name="Duerre P."/>
        </authorList>
    </citation>
    <scope>NUCLEOTIDE SEQUENCE [GENOMIC DNA]</scope>
    <source>
        <strain>ATCC 824 / DSM 792 / JCM 1419 / IAM 19013 / LMG 5710 / NBRC 13948 / NRRL B-527 / VKM B-1787 / 2291 / W</strain>
    </source>
</reference>
<reference key="2">
    <citation type="journal article" date="2001" name="J. Bacteriol.">
        <title>Genome sequence and comparative analysis of the solvent-producing bacterium Clostridium acetobutylicum.</title>
        <authorList>
            <person name="Noelling J."/>
            <person name="Breton G."/>
            <person name="Omelchenko M.V."/>
            <person name="Makarova K.S."/>
            <person name="Zeng Q."/>
            <person name="Gibson R."/>
            <person name="Lee H.M."/>
            <person name="Dubois J."/>
            <person name="Qiu D."/>
            <person name="Hitti J."/>
            <person name="Wolf Y.I."/>
            <person name="Tatusov R.L."/>
            <person name="Sabathe F."/>
            <person name="Doucette-Stamm L.A."/>
            <person name="Soucaille P."/>
            <person name="Daly M.J."/>
            <person name="Bennett G.N."/>
            <person name="Koonin E.V."/>
            <person name="Smith D.R."/>
        </authorList>
    </citation>
    <scope>NUCLEOTIDE SEQUENCE [LARGE SCALE GENOMIC DNA]</scope>
    <source>
        <strain>ATCC 824 / DSM 792 / JCM 1419 / IAM 19013 / LMG 5710 / NBRC 13948 / NRRL B-527 / VKM B-1787 / 2291 / W</strain>
    </source>
</reference>
<comment type="sequence caution" evidence="1">
    <conflict type="erroneous initiation">
        <sequence resource="EMBL-CDS" id="CAA46377"/>
    </conflict>
</comment>